<evidence type="ECO:0000255" key="1">
    <source>
        <dbReference type="PROSITE-ProRule" id="PRU10039"/>
    </source>
</evidence>
<evidence type="ECO:0000269" key="2">
    <source>
    </source>
</evidence>
<evidence type="ECO:0000305" key="3"/>
<organism>
    <name type="scientific">Schizosaccharomyces pombe (strain 972 / ATCC 24843)</name>
    <name type="common">Fission yeast</name>
    <dbReference type="NCBI Taxonomy" id="284812"/>
    <lineage>
        <taxon>Eukaryota</taxon>
        <taxon>Fungi</taxon>
        <taxon>Dikarya</taxon>
        <taxon>Ascomycota</taxon>
        <taxon>Taphrinomycotina</taxon>
        <taxon>Schizosaccharomycetes</taxon>
        <taxon>Schizosaccharomycetales</taxon>
        <taxon>Schizosaccharomycetaceae</taxon>
        <taxon>Schizosaccharomyces</taxon>
    </lineage>
</organism>
<feature type="chain" id="PRO_0000310361" description="Uncharacterized esterase/lipase C417.12">
    <location>
        <begin position="1"/>
        <end position="539"/>
    </location>
</feature>
<feature type="active site" description="Acyl-ester intermediate" evidence="1">
    <location>
        <position position="216"/>
    </location>
</feature>
<sequence length="539" mass="61254">MYESPIILGSKPCTLNIPGMGVLHGLTVLDENGKEKCHRFTGIRYAKPPVGKLRWRRPVTLEDGYDYSGDYNQFKTICPQPFYNNRKNQVRNPDFKYDEDCLFLNIWVPAGEKPAEGWPVLYFIHGGWLQVGNPLHYRQCDPQDLQADGSPAKFILVSPGHRLNLFGFLAGKELLEEDPKSSNFGFWDQRLGLEWTYKHIESFGGNKENIAVGGISAGSYSALFQLIYETYHPEANQIIKRALLLSNGLSVQPKSVEESQIQFNELAQKFGIPLELSSAEKLEKLRAIPFQDLADNILNLRLHTFRAVTDGDFVNPNTFKDIYDGTFGKRIRDSGRELIIGEVNNEHSIYANTNPPKSKEDLFNQVNNYYPEKVTKALLELYPKVPDMEDEKEYLAAIKALFGSIVSDMQVYASTRVLINGLVKGGVPLEKIYRYRIAFRGKFFDKYEPPESLVPHAGDLGLWFYNVVDGILPEEIPIYKAWLKSYGEWMSTGKTDWGTTKTEEYRLLDADGTIKVVDDEKWDWGLKVGRTVAGVFGLN</sequence>
<dbReference type="EC" id="3.1.-.-"/>
<dbReference type="EMBL" id="CU329672">
    <property type="protein sequence ID" value="CAA22658.2"/>
    <property type="molecule type" value="Genomic_DNA"/>
</dbReference>
<dbReference type="PIR" id="T41347">
    <property type="entry name" value="T41347"/>
</dbReference>
<dbReference type="RefSeq" id="NP_588289.2">
    <property type="nucleotide sequence ID" value="NM_001023279.2"/>
</dbReference>
<dbReference type="SMR" id="O94493"/>
<dbReference type="BioGRID" id="275994">
    <property type="interactions" value="4"/>
</dbReference>
<dbReference type="FunCoup" id="O94493">
    <property type="interactions" value="2"/>
</dbReference>
<dbReference type="STRING" id="284812.O94493"/>
<dbReference type="ESTHER" id="schpo-SPCC417.12">
    <property type="family name" value="Fungal_carboxylesterase_lipase"/>
</dbReference>
<dbReference type="MEROPS" id="S09.A99"/>
<dbReference type="PaxDb" id="4896-SPCC417.12.1"/>
<dbReference type="EnsemblFungi" id="SPCC417.12.1">
    <property type="protein sequence ID" value="SPCC417.12.1:pep"/>
    <property type="gene ID" value="SPCC417.12"/>
</dbReference>
<dbReference type="KEGG" id="spo:2539430"/>
<dbReference type="PomBase" id="SPCC417.12"/>
<dbReference type="VEuPathDB" id="FungiDB:SPCC417.12"/>
<dbReference type="eggNOG" id="KOG1516">
    <property type="taxonomic scope" value="Eukaryota"/>
</dbReference>
<dbReference type="HOGENOM" id="CLU_006586_17_1_1"/>
<dbReference type="InParanoid" id="O94493"/>
<dbReference type="OMA" id="WNYSIMH"/>
<dbReference type="PRO" id="PR:O94493"/>
<dbReference type="Proteomes" id="UP000002485">
    <property type="component" value="Chromosome III"/>
</dbReference>
<dbReference type="GO" id="GO:0005829">
    <property type="term" value="C:cytosol"/>
    <property type="evidence" value="ECO:0007005"/>
    <property type="project" value="PomBase"/>
</dbReference>
<dbReference type="GO" id="GO:0005634">
    <property type="term" value="C:nucleus"/>
    <property type="evidence" value="ECO:0007005"/>
    <property type="project" value="PomBase"/>
</dbReference>
<dbReference type="GO" id="GO:0052689">
    <property type="term" value="F:carboxylic ester hydrolase activity"/>
    <property type="evidence" value="ECO:0000255"/>
    <property type="project" value="PomBase"/>
</dbReference>
<dbReference type="Gene3D" id="3.40.50.1820">
    <property type="entry name" value="alpha/beta hydrolase"/>
    <property type="match status" value="1"/>
</dbReference>
<dbReference type="InterPro" id="IPR029058">
    <property type="entry name" value="AB_hydrolase_fold"/>
</dbReference>
<dbReference type="InterPro" id="IPR002018">
    <property type="entry name" value="CarbesteraseB"/>
</dbReference>
<dbReference type="InterPro" id="IPR019826">
    <property type="entry name" value="Carboxylesterase_B_AS"/>
</dbReference>
<dbReference type="InterPro" id="IPR019819">
    <property type="entry name" value="Carboxylesterase_B_CS"/>
</dbReference>
<dbReference type="PANTHER" id="PTHR43142">
    <property type="entry name" value="CARBOXYLIC ESTER HYDROLASE"/>
    <property type="match status" value="1"/>
</dbReference>
<dbReference type="PANTHER" id="PTHR43142:SF8">
    <property type="entry name" value="CARBOXYLIC ESTER HYDROLASE"/>
    <property type="match status" value="1"/>
</dbReference>
<dbReference type="Pfam" id="PF00135">
    <property type="entry name" value="COesterase"/>
    <property type="match status" value="1"/>
</dbReference>
<dbReference type="SUPFAM" id="SSF53474">
    <property type="entry name" value="alpha/beta-Hydrolases"/>
    <property type="match status" value="1"/>
</dbReference>
<dbReference type="PROSITE" id="PS00122">
    <property type="entry name" value="CARBOXYLESTERASE_B_1"/>
    <property type="match status" value="1"/>
</dbReference>
<dbReference type="PROSITE" id="PS00941">
    <property type="entry name" value="CARBOXYLESTERASE_B_2"/>
    <property type="match status" value="1"/>
</dbReference>
<proteinExistence type="inferred from homology"/>
<comment type="subcellular location">
    <subcellularLocation>
        <location evidence="2">Cytoplasm</location>
    </subcellularLocation>
    <subcellularLocation>
        <location evidence="2">Nucleus</location>
    </subcellularLocation>
</comment>
<comment type="similarity">
    <text evidence="3">Belongs to the type-B carboxylesterase/lipase family.</text>
</comment>
<reference key="1">
    <citation type="journal article" date="2002" name="Nature">
        <title>The genome sequence of Schizosaccharomyces pombe.</title>
        <authorList>
            <person name="Wood V."/>
            <person name="Gwilliam R."/>
            <person name="Rajandream M.A."/>
            <person name="Lyne M.H."/>
            <person name="Lyne R."/>
            <person name="Stewart A."/>
            <person name="Sgouros J.G."/>
            <person name="Peat N."/>
            <person name="Hayles J."/>
            <person name="Baker S.G."/>
            <person name="Basham D."/>
            <person name="Bowman S."/>
            <person name="Brooks K."/>
            <person name="Brown D."/>
            <person name="Brown S."/>
            <person name="Chillingworth T."/>
            <person name="Churcher C.M."/>
            <person name="Collins M."/>
            <person name="Connor R."/>
            <person name="Cronin A."/>
            <person name="Davis P."/>
            <person name="Feltwell T."/>
            <person name="Fraser A."/>
            <person name="Gentles S."/>
            <person name="Goble A."/>
            <person name="Hamlin N."/>
            <person name="Harris D.E."/>
            <person name="Hidalgo J."/>
            <person name="Hodgson G."/>
            <person name="Holroyd S."/>
            <person name="Hornsby T."/>
            <person name="Howarth S."/>
            <person name="Huckle E.J."/>
            <person name="Hunt S."/>
            <person name="Jagels K."/>
            <person name="James K.D."/>
            <person name="Jones L."/>
            <person name="Jones M."/>
            <person name="Leather S."/>
            <person name="McDonald S."/>
            <person name="McLean J."/>
            <person name="Mooney P."/>
            <person name="Moule S."/>
            <person name="Mungall K.L."/>
            <person name="Murphy L.D."/>
            <person name="Niblett D."/>
            <person name="Odell C."/>
            <person name="Oliver K."/>
            <person name="O'Neil S."/>
            <person name="Pearson D."/>
            <person name="Quail M.A."/>
            <person name="Rabbinowitsch E."/>
            <person name="Rutherford K.M."/>
            <person name="Rutter S."/>
            <person name="Saunders D."/>
            <person name="Seeger K."/>
            <person name="Sharp S."/>
            <person name="Skelton J."/>
            <person name="Simmonds M.N."/>
            <person name="Squares R."/>
            <person name="Squares S."/>
            <person name="Stevens K."/>
            <person name="Taylor K."/>
            <person name="Taylor R.G."/>
            <person name="Tivey A."/>
            <person name="Walsh S.V."/>
            <person name="Warren T."/>
            <person name="Whitehead S."/>
            <person name="Woodward J.R."/>
            <person name="Volckaert G."/>
            <person name="Aert R."/>
            <person name="Robben J."/>
            <person name="Grymonprez B."/>
            <person name="Weltjens I."/>
            <person name="Vanstreels E."/>
            <person name="Rieger M."/>
            <person name="Schaefer M."/>
            <person name="Mueller-Auer S."/>
            <person name="Gabel C."/>
            <person name="Fuchs M."/>
            <person name="Duesterhoeft A."/>
            <person name="Fritzc C."/>
            <person name="Holzer E."/>
            <person name="Moestl D."/>
            <person name="Hilbert H."/>
            <person name="Borzym K."/>
            <person name="Langer I."/>
            <person name="Beck A."/>
            <person name="Lehrach H."/>
            <person name="Reinhardt R."/>
            <person name="Pohl T.M."/>
            <person name="Eger P."/>
            <person name="Zimmermann W."/>
            <person name="Wedler H."/>
            <person name="Wambutt R."/>
            <person name="Purnelle B."/>
            <person name="Goffeau A."/>
            <person name="Cadieu E."/>
            <person name="Dreano S."/>
            <person name="Gloux S."/>
            <person name="Lelaure V."/>
            <person name="Mottier S."/>
            <person name="Galibert F."/>
            <person name="Aves S.J."/>
            <person name="Xiang Z."/>
            <person name="Hunt C."/>
            <person name="Moore K."/>
            <person name="Hurst S.M."/>
            <person name="Lucas M."/>
            <person name="Rochet M."/>
            <person name="Gaillardin C."/>
            <person name="Tallada V.A."/>
            <person name="Garzon A."/>
            <person name="Thode G."/>
            <person name="Daga R.R."/>
            <person name="Cruzado L."/>
            <person name="Jimenez J."/>
            <person name="Sanchez M."/>
            <person name="del Rey F."/>
            <person name="Benito J."/>
            <person name="Dominguez A."/>
            <person name="Revuelta J.L."/>
            <person name="Moreno S."/>
            <person name="Armstrong J."/>
            <person name="Forsburg S.L."/>
            <person name="Cerutti L."/>
            <person name="Lowe T."/>
            <person name="McCombie W.R."/>
            <person name="Paulsen I."/>
            <person name="Potashkin J."/>
            <person name="Shpakovski G.V."/>
            <person name="Ussery D."/>
            <person name="Barrell B.G."/>
            <person name="Nurse P."/>
        </authorList>
    </citation>
    <scope>NUCLEOTIDE SEQUENCE [LARGE SCALE GENOMIC DNA]</scope>
    <source>
        <strain>972 / ATCC 24843</strain>
    </source>
</reference>
<reference key="2">
    <citation type="journal article" date="2011" name="Science">
        <title>Comparative functional genomics of the fission yeasts.</title>
        <authorList>
            <person name="Rhind N."/>
            <person name="Chen Z."/>
            <person name="Yassour M."/>
            <person name="Thompson D.A."/>
            <person name="Haas B.J."/>
            <person name="Habib N."/>
            <person name="Wapinski I."/>
            <person name="Roy S."/>
            <person name="Lin M.F."/>
            <person name="Heiman D.I."/>
            <person name="Young S.K."/>
            <person name="Furuya K."/>
            <person name="Guo Y."/>
            <person name="Pidoux A."/>
            <person name="Chen H.M."/>
            <person name="Robbertse B."/>
            <person name="Goldberg J.M."/>
            <person name="Aoki K."/>
            <person name="Bayne E.H."/>
            <person name="Berlin A.M."/>
            <person name="Desjardins C.A."/>
            <person name="Dobbs E."/>
            <person name="Dukaj L."/>
            <person name="Fan L."/>
            <person name="FitzGerald M.G."/>
            <person name="French C."/>
            <person name="Gujja S."/>
            <person name="Hansen K."/>
            <person name="Keifenheim D."/>
            <person name="Levin J.Z."/>
            <person name="Mosher R.A."/>
            <person name="Mueller C.A."/>
            <person name="Pfiffner J."/>
            <person name="Priest M."/>
            <person name="Russ C."/>
            <person name="Smialowska A."/>
            <person name="Swoboda P."/>
            <person name="Sykes S.M."/>
            <person name="Vaughn M."/>
            <person name="Vengrova S."/>
            <person name="Yoder R."/>
            <person name="Zeng Q."/>
            <person name="Allshire R."/>
            <person name="Baulcombe D."/>
            <person name="Birren B.W."/>
            <person name="Brown W."/>
            <person name="Ekwall K."/>
            <person name="Kellis M."/>
            <person name="Leatherwood J."/>
            <person name="Levin H."/>
            <person name="Margalit H."/>
            <person name="Martienssen R."/>
            <person name="Nieduszynski C.A."/>
            <person name="Spatafora J.W."/>
            <person name="Friedman N."/>
            <person name="Dalgaard J.Z."/>
            <person name="Baumann P."/>
            <person name="Niki H."/>
            <person name="Regev A."/>
            <person name="Nusbaum C."/>
        </authorList>
    </citation>
    <scope>REVISION OF GENE MODEL</scope>
</reference>
<reference key="3">
    <citation type="journal article" date="2006" name="Nat. Biotechnol.">
        <title>ORFeome cloning and global analysis of protein localization in the fission yeast Schizosaccharomyces pombe.</title>
        <authorList>
            <person name="Matsuyama A."/>
            <person name="Arai R."/>
            <person name="Yashiroda Y."/>
            <person name="Shirai A."/>
            <person name="Kamata A."/>
            <person name="Sekido S."/>
            <person name="Kobayashi Y."/>
            <person name="Hashimoto A."/>
            <person name="Hamamoto M."/>
            <person name="Hiraoka Y."/>
            <person name="Horinouchi S."/>
            <person name="Yoshida M."/>
        </authorList>
    </citation>
    <scope>SUBCELLULAR LOCATION [LARGE SCALE ANALYSIS]</scope>
</reference>
<accession>O94493</accession>
<name>YC7C_SCHPO</name>
<protein>
    <recommendedName>
        <fullName>Uncharacterized esterase/lipase C417.12</fullName>
        <ecNumber>3.1.-.-</ecNumber>
    </recommendedName>
</protein>
<gene>
    <name type="ORF">SPCC417.12</name>
</gene>
<keyword id="KW-0963">Cytoplasm</keyword>
<keyword id="KW-0378">Hydrolase</keyword>
<keyword id="KW-0539">Nucleus</keyword>
<keyword id="KW-1185">Reference proteome</keyword>